<organism>
    <name type="scientific">Oryza sativa subsp. japonica</name>
    <name type="common">Rice</name>
    <dbReference type="NCBI Taxonomy" id="39947"/>
    <lineage>
        <taxon>Eukaryota</taxon>
        <taxon>Viridiplantae</taxon>
        <taxon>Streptophyta</taxon>
        <taxon>Embryophyta</taxon>
        <taxon>Tracheophyta</taxon>
        <taxon>Spermatophyta</taxon>
        <taxon>Magnoliopsida</taxon>
        <taxon>Liliopsida</taxon>
        <taxon>Poales</taxon>
        <taxon>Poaceae</taxon>
        <taxon>BOP clade</taxon>
        <taxon>Oryzoideae</taxon>
        <taxon>Oryzeae</taxon>
        <taxon>Oryzinae</taxon>
        <taxon>Oryza</taxon>
        <taxon>Oryza sativa</taxon>
    </lineage>
</organism>
<comment type="function">
    <text evidence="4 5 7 11">Responsible for the deacetylation of lysine residues on the N-terminal part of the core histones (H2A, H2B, H3 and H4). Histone deacetylation gives a tag for epigenetic repression and plays an important role in transcriptional regulation, cell cycle progression and developmental events. Histone deacetylases act via the formation of large multiprotein complexes (Probable). Negatively regulates the expression of the NAC48/NAC6 gene that controls root growth in seedlings. Epigenetically represses the expression of NAC48/NAC6 by deacetylating 'Lys-9' (H3K9ac), 'Lys-14' (H3K14ac) and 'Lys-18' (H3K18ac) of histone H3, and 'Lys-5' (H4K5ac), 'Lys-12' (H4K12ac) and 'Lys-16' (H4K16ac) of histone H4 (PubMed:19453457). Functions in the regulation of gene expression in the whole genome (PubMed:12581311). Acts as a chromatin remodeling regulator to promote the formation of a repressive chromatin state. Functions with MODD via its interaction with TPR3, to down-regulates the histone acetylation level at BZIP46 target genes. BZIP46 is a positive regulator of abscisic acid (ABA) signaling and drought stress tolerance (PubMed:27468891).</text>
</comment>
<comment type="catalytic activity">
    <reaction evidence="1">
        <text>N(6)-acetyl-L-lysyl-[histone] + H2O = L-lysyl-[histone] + acetate</text>
        <dbReference type="Rhea" id="RHEA:58196"/>
        <dbReference type="Rhea" id="RHEA-COMP:9845"/>
        <dbReference type="Rhea" id="RHEA-COMP:11338"/>
        <dbReference type="ChEBI" id="CHEBI:15377"/>
        <dbReference type="ChEBI" id="CHEBI:29969"/>
        <dbReference type="ChEBI" id="CHEBI:30089"/>
        <dbReference type="ChEBI" id="CHEBI:61930"/>
        <dbReference type="EC" id="3.5.1.98"/>
    </reaction>
</comment>
<comment type="cofactor">
    <cofactor evidence="2">
        <name>Zn(2+)</name>
        <dbReference type="ChEBI" id="CHEBI:29105"/>
    </cofactor>
    <text evidence="2">Binds 1 zinc ion per subunit.</text>
</comment>
<comment type="subunit">
    <text evidence="7">Interacts with TPR3.</text>
</comment>
<comment type="subcellular location">
    <subcellularLocation>
        <location evidence="1">Nucleus</location>
    </subcellularLocation>
</comment>
<comment type="alternative products">
    <event type="alternative splicing"/>
    <isoform>
        <id>Q7Y0Y8-1</id>
        <name>1</name>
        <sequence type="displayed"/>
    </isoform>
    <isoform>
        <id>Q7Y0Y8-2</id>
        <name>2</name>
        <sequence type="described" ref="VSP_058970 VSP_058971"/>
    </isoform>
</comment>
<comment type="tissue specificity">
    <text evidence="4">Expressed in roots and leaves.</text>
</comment>
<comment type="induction">
    <text evidence="6">Down-regulated by drought and salt stresses.</text>
</comment>
<comment type="miscellaneous">
    <text evidence="4 6">Plants over-expressing HDAC1 exhibit increased growth rate and altered plant architecture (PubMed:12581311). Plants silencing HDAC1 exhibit narrow leaves, reduced diameter of stems and reduced plant height (PubMed:19664599).</text>
</comment>
<comment type="similarity">
    <text evidence="10">Belongs to the histone deacetylase family. HD Type 1 subfamily.</text>
</comment>
<protein>
    <recommendedName>
        <fullName evidence="8">Histone deacetylase 1</fullName>
        <shortName evidence="8">OsHDAC1</shortName>
        <ecNumber evidence="1">3.5.1.98</ecNumber>
    </recommendedName>
</protein>
<name>HDAC1_ORYSJ</name>
<accession>Q7Y0Y8</accession>
<accession>Q5VP94</accession>
<keyword id="KW-0025">Alternative splicing</keyword>
<keyword id="KW-0156">Chromatin regulator</keyword>
<keyword id="KW-0378">Hydrolase</keyword>
<keyword id="KW-0479">Metal-binding</keyword>
<keyword id="KW-0539">Nucleus</keyword>
<keyword id="KW-1185">Reference proteome</keyword>
<keyword id="KW-0678">Repressor</keyword>
<keyword id="KW-0804">Transcription</keyword>
<keyword id="KW-0805">Transcription regulation</keyword>
<keyword id="KW-0862">Zinc</keyword>
<proteinExistence type="evidence at protein level"/>
<evidence type="ECO:0000250" key="1">
    <source>
        <dbReference type="UniProtKB" id="O22446"/>
    </source>
</evidence>
<evidence type="ECO:0000250" key="2">
    <source>
        <dbReference type="UniProtKB" id="Q8GXJ1"/>
    </source>
</evidence>
<evidence type="ECO:0000256" key="3">
    <source>
        <dbReference type="SAM" id="MobiDB-lite"/>
    </source>
</evidence>
<evidence type="ECO:0000269" key="4">
    <source>
    </source>
</evidence>
<evidence type="ECO:0000269" key="5">
    <source>
    </source>
</evidence>
<evidence type="ECO:0000269" key="6">
    <source>
    </source>
</evidence>
<evidence type="ECO:0000269" key="7">
    <source>
    </source>
</evidence>
<evidence type="ECO:0000303" key="8">
    <source>
    </source>
</evidence>
<evidence type="ECO:0000303" key="9">
    <source>
    </source>
</evidence>
<evidence type="ECO:0000305" key="10"/>
<evidence type="ECO:0000305" key="11">
    <source>
    </source>
</evidence>
<evidence type="ECO:0000312" key="12">
    <source>
        <dbReference type="EMBL" id="BAD68730.1"/>
    </source>
</evidence>
<evidence type="ECO:0000312" key="13">
    <source>
        <dbReference type="EMBL" id="BAF19857.1"/>
    </source>
</evidence>
<reference key="1">
    <citation type="journal article" date="2003" name="Plant J.">
        <title>Structure and expression of the rice class-I type histone deacetylase genes OsHDAC1-3: OsHDAC1 overexpression in transgenic plants leads to increased growth rate and altered architecture.</title>
        <authorList>
            <person name="Jang I.C."/>
            <person name="Pahk Y.M."/>
            <person name="Song S.I."/>
            <person name="Kwon H.J."/>
            <person name="Nahm B.H."/>
            <person name="Kim J.K."/>
        </authorList>
    </citation>
    <scope>NUCLEOTIDE SEQUENCE [MRNA]</scope>
    <scope>FUNCTION</scope>
    <scope>TISSUE SPECIFICITY</scope>
</reference>
<reference key="2">
    <citation type="journal article" date="2005" name="Nature">
        <title>The map-based sequence of the rice genome.</title>
        <authorList>
            <consortium name="International rice genome sequencing project (IRGSP)"/>
        </authorList>
    </citation>
    <scope>NUCLEOTIDE SEQUENCE [LARGE SCALE GENOMIC DNA]</scope>
    <source>
        <strain>cv. Nipponbare</strain>
    </source>
</reference>
<reference key="3">
    <citation type="journal article" date="2008" name="Nucleic Acids Res.">
        <title>The rice annotation project database (RAP-DB): 2008 update.</title>
        <authorList>
            <consortium name="The rice annotation project (RAP)"/>
        </authorList>
    </citation>
    <scope>GENOME REANNOTATION</scope>
    <source>
        <strain>cv. Nipponbare</strain>
    </source>
</reference>
<reference key="4">
    <citation type="journal article" date="2013" name="Rice">
        <title>Improvement of the Oryza sativa Nipponbare reference genome using next generation sequence and optical map data.</title>
        <authorList>
            <person name="Kawahara Y."/>
            <person name="de la Bastide M."/>
            <person name="Hamilton J.P."/>
            <person name="Kanamori H."/>
            <person name="McCombie W.R."/>
            <person name="Ouyang S."/>
            <person name="Schwartz D.C."/>
            <person name="Tanaka T."/>
            <person name="Wu J."/>
            <person name="Zhou S."/>
            <person name="Childs K.L."/>
            <person name="Davidson R.M."/>
            <person name="Lin H."/>
            <person name="Quesada-Ocampo L."/>
            <person name="Vaillancourt B."/>
            <person name="Sakai H."/>
            <person name="Lee S.S."/>
            <person name="Kim J."/>
            <person name="Numa H."/>
            <person name="Itoh T."/>
            <person name="Buell C.R."/>
            <person name="Matsumoto T."/>
        </authorList>
    </citation>
    <scope>GENOME REANNOTATION</scope>
    <source>
        <strain>cv. Nipponbare</strain>
    </source>
</reference>
<reference key="5">
    <citation type="journal article" date="2003" name="Science">
        <title>Collection, mapping, and annotation of over 28,000 cDNA clones from japonica rice.</title>
        <authorList>
            <consortium name="The rice full-length cDNA consortium"/>
        </authorList>
    </citation>
    <scope>NUCLEOTIDE SEQUENCE [LARGE SCALE MRNA] (ISOFORMS 1 AND 2)</scope>
    <source>
        <strain>cv. Nipponbare</strain>
    </source>
</reference>
<reference key="6">
    <citation type="journal article" date="2009" name="Biochem. Biophys. Res. Commun.">
        <title>Rice histone deacetylase genes display specific expression patterns and developmental functions.</title>
        <authorList>
            <person name="Hu Y."/>
            <person name="Qin F."/>
            <person name="Huang L."/>
            <person name="Sun Q."/>
            <person name="Li C."/>
            <person name="Zhao Y."/>
            <person name="Zhou D.X."/>
        </authorList>
    </citation>
    <scope>INDUCTION</scope>
</reference>
<reference key="7">
    <citation type="journal article" date="2009" name="Plant J.">
        <title>The histone deacetylase OsHDAC1 epigenetically regulates the OsNAC6 gene that controls seedling root growth in rice.</title>
        <authorList>
            <person name="Chung P.J."/>
            <person name="Kim Y.S."/>
            <person name="Jeong J.S."/>
            <person name="Park S.H."/>
            <person name="Nahm B.H."/>
            <person name="Kim J.K."/>
        </authorList>
    </citation>
    <scope>FUNCTION</scope>
</reference>
<reference key="8">
    <citation type="journal article" date="2016" name="Plant Cell">
        <title>MODD mediates deactivation and degradation of OsbZIP46 to negatively regulate ABA signaling and drought resistance in rice.</title>
        <authorList>
            <person name="Tang N."/>
            <person name="Ma S."/>
            <person name="Zong W."/>
            <person name="Yang N."/>
            <person name="Lv Y."/>
            <person name="Yan C."/>
            <person name="Guo Z."/>
            <person name="Li J."/>
            <person name="Li X."/>
            <person name="Xiang Y."/>
            <person name="Song H."/>
            <person name="Xiao J."/>
            <person name="Li X."/>
            <person name="Xiong L."/>
        </authorList>
    </citation>
    <scope>FUNCTION</scope>
    <scope>INTERACTION WITH TPR3</scope>
</reference>
<sequence length="518" mass="57506">MDASAGGGGNSLPTAGADGAKRRVCYFYDAEVGNYYYGQGHPMKPHRIRMTHALLAHYGLLDQMQVLKPHPARDRDLCRFHADDYVAFLRSVTPETQQDQIRALKRFNVGEDCPVFDGLYSFCQTYAGGSVGGAVKLNHGHDIAINWAGGLHHAKKCEASGFCYVNDIVLAILELLKYHQRVLYVDIDIHHGDGVEEAFYTTDRVMTVSFHKFGDYFPGTGDIRDIGHSKGKYYSLNVPLDDGIDDESYQSLFKPIMGKVMEVFRPGAVVLQCGADSLSGDRLGCFNLSIRGHAECVRFMRSFNVPLLLLGGGGYTIRNVARCWCYETGVALGHELTDKMPPNEYFEYFGPDYTLHVAPSNMENKNTRQQLDDIRSRLLDNLSKLRHAPSVQFQERPPEAELPEQDEDQEDPDERHHADSDVEMDDVKPLDDSGRRSSIQNVRVKRESAETDAADQDGNRVAAENTKGTEPAADGVGSSKQTVPTDASAMAIDEPGSLKVEPDNSNKLQDQPSVHQKT</sequence>
<feature type="chain" id="PRO_0000440560" description="Histone deacetylase 1">
    <location>
        <begin position="1"/>
        <end position="518"/>
    </location>
</feature>
<feature type="region of interest" description="Histone deacetylase" evidence="10">
    <location>
        <begin position="22"/>
        <end position="333"/>
    </location>
</feature>
<feature type="region of interest" description="Disordered" evidence="3">
    <location>
        <begin position="387"/>
        <end position="518"/>
    </location>
</feature>
<feature type="compositionally biased region" description="Acidic residues" evidence="3">
    <location>
        <begin position="401"/>
        <end position="412"/>
    </location>
</feature>
<feature type="compositionally biased region" description="Basic and acidic residues" evidence="3">
    <location>
        <begin position="413"/>
        <end position="435"/>
    </location>
</feature>
<feature type="compositionally biased region" description="Polar residues" evidence="3">
    <location>
        <begin position="503"/>
        <end position="518"/>
    </location>
</feature>
<feature type="active site" description="Proton donor/acceptor" evidence="2">
    <location>
        <position position="153"/>
    </location>
</feature>
<feature type="binding site" evidence="2">
    <location>
        <position position="188"/>
    </location>
    <ligand>
        <name>Zn(2+)</name>
        <dbReference type="ChEBI" id="CHEBI:29105"/>
    </ligand>
</feature>
<feature type="binding site" evidence="2">
    <location>
        <position position="190"/>
    </location>
    <ligand>
        <name>Zn(2+)</name>
        <dbReference type="ChEBI" id="CHEBI:29105"/>
    </ligand>
</feature>
<feature type="binding site" evidence="2">
    <location>
        <position position="276"/>
    </location>
    <ligand>
        <name>Zn(2+)</name>
        <dbReference type="ChEBI" id="CHEBI:29105"/>
    </ligand>
</feature>
<feature type="site" description="Polarizes the scissile carbonyl of the substrate" evidence="2">
    <location>
        <position position="315"/>
    </location>
</feature>
<feature type="splice variant" id="VSP_058970" description="In isoform 2.">
    <original>DGNR</original>
    <variation>VFFY</variation>
    <location>
        <begin position="457"/>
        <end position="460"/>
    </location>
</feature>
<feature type="splice variant" id="VSP_058971" description="In isoform 2.">
    <location>
        <begin position="461"/>
        <end position="518"/>
    </location>
</feature>
<gene>
    <name evidence="8" type="primary">HDAC1</name>
    <name evidence="9" type="synonym">HDA702</name>
    <name evidence="13" type="ordered locus">Os06g0583400</name>
    <name evidence="10" type="ordered locus">LOC_Os06g38470</name>
    <name evidence="12" type="ORF">P0498C03.28-1</name>
</gene>
<dbReference type="EC" id="3.5.1.98" evidence="1"/>
<dbReference type="EMBL" id="AF513382">
    <property type="protein sequence ID" value="AAP47171.1"/>
    <property type="molecule type" value="mRNA"/>
</dbReference>
<dbReference type="EMBL" id="AP003724">
    <property type="protein sequence ID" value="BAD68730.1"/>
    <property type="molecule type" value="Genomic_DNA"/>
</dbReference>
<dbReference type="EMBL" id="AP003724">
    <property type="protein sequence ID" value="BAD68731.1"/>
    <property type="molecule type" value="Genomic_DNA"/>
</dbReference>
<dbReference type="EMBL" id="AP008212">
    <property type="protein sequence ID" value="BAF19857.1"/>
    <property type="molecule type" value="Genomic_DNA"/>
</dbReference>
<dbReference type="EMBL" id="AP014962">
    <property type="protein sequence ID" value="BAS98377.1"/>
    <property type="molecule type" value="Genomic_DNA"/>
</dbReference>
<dbReference type="EMBL" id="AP014962">
    <property type="protein sequence ID" value="BAS98378.1"/>
    <property type="molecule type" value="Genomic_DNA"/>
</dbReference>
<dbReference type="EMBL" id="AK068051">
    <property type="protein sequence ID" value="BAG90733.1"/>
    <property type="molecule type" value="mRNA"/>
</dbReference>
<dbReference type="EMBL" id="AK068682">
    <property type="protein sequence ID" value="BAG91027.1"/>
    <property type="molecule type" value="mRNA"/>
</dbReference>
<dbReference type="RefSeq" id="XP_015643781.1">
    <molecule id="Q7Y0Y8-1"/>
    <property type="nucleotide sequence ID" value="XM_015788295.1"/>
</dbReference>
<dbReference type="SMR" id="Q7Y0Y8"/>
<dbReference type="FunCoup" id="Q7Y0Y8">
    <property type="interactions" value="3514"/>
</dbReference>
<dbReference type="STRING" id="39947.Q7Y0Y8"/>
<dbReference type="iPTMnet" id="Q7Y0Y8"/>
<dbReference type="PaxDb" id="39947-Q7Y0Y8"/>
<dbReference type="EnsemblPlants" id="Os06t0583400-01">
    <molecule id="Q7Y0Y8-1"/>
    <property type="protein sequence ID" value="Os06t0583400-01"/>
    <property type="gene ID" value="Os06g0583400"/>
</dbReference>
<dbReference type="Gramene" id="Os06t0583400-01">
    <molecule id="Q7Y0Y8-1"/>
    <property type="protein sequence ID" value="Os06t0583400-01"/>
    <property type="gene ID" value="Os06g0583400"/>
</dbReference>
<dbReference type="KEGG" id="dosa:Os06g0583400"/>
<dbReference type="KEGG" id="osa:4341387"/>
<dbReference type="eggNOG" id="KOG1342">
    <property type="taxonomic scope" value="Eukaryota"/>
</dbReference>
<dbReference type="InParanoid" id="Q7Y0Y8"/>
<dbReference type="OMA" id="RCHTDEY"/>
<dbReference type="OrthoDB" id="1918432at2759"/>
<dbReference type="BRENDA" id="3.5.1.98">
    <property type="organism ID" value="8948"/>
</dbReference>
<dbReference type="PlantReactome" id="R-OSA-6787011">
    <property type="pathway name" value="Jasmonic acid signaling"/>
</dbReference>
<dbReference type="Proteomes" id="UP000000763">
    <property type="component" value="Chromosome 6"/>
</dbReference>
<dbReference type="Proteomes" id="UP000059680">
    <property type="component" value="Chromosome 6"/>
</dbReference>
<dbReference type="GO" id="GO:0005634">
    <property type="term" value="C:nucleus"/>
    <property type="evidence" value="ECO:0000318"/>
    <property type="project" value="GO_Central"/>
</dbReference>
<dbReference type="GO" id="GO:0004407">
    <property type="term" value="F:histone deacetylase activity"/>
    <property type="evidence" value="ECO:0000318"/>
    <property type="project" value="GO_Central"/>
</dbReference>
<dbReference type="GO" id="GO:0141221">
    <property type="term" value="F:histone deacetylase activity, hydrolytic mechanism"/>
    <property type="evidence" value="ECO:0007669"/>
    <property type="project" value="UniProtKB-EC"/>
</dbReference>
<dbReference type="GO" id="GO:0008270">
    <property type="term" value="F:zinc ion binding"/>
    <property type="evidence" value="ECO:0000250"/>
    <property type="project" value="UniProtKB"/>
</dbReference>
<dbReference type="GO" id="GO:0040029">
    <property type="term" value="P:epigenetic regulation of gene expression"/>
    <property type="evidence" value="ECO:0000318"/>
    <property type="project" value="GO_Central"/>
</dbReference>
<dbReference type="FunFam" id="3.40.800.20:FF:000001">
    <property type="entry name" value="Histone deacetylase"/>
    <property type="match status" value="1"/>
</dbReference>
<dbReference type="Gene3D" id="3.40.800.20">
    <property type="entry name" value="Histone deacetylase domain"/>
    <property type="match status" value="1"/>
</dbReference>
<dbReference type="InterPro" id="IPR050284">
    <property type="entry name" value="HDAC_PDAC"/>
</dbReference>
<dbReference type="InterPro" id="IPR000286">
    <property type="entry name" value="His_deacetylse"/>
</dbReference>
<dbReference type="InterPro" id="IPR003084">
    <property type="entry name" value="His_deacetylse_1"/>
</dbReference>
<dbReference type="InterPro" id="IPR023801">
    <property type="entry name" value="His_deacetylse_dom"/>
</dbReference>
<dbReference type="InterPro" id="IPR037138">
    <property type="entry name" value="His_deacetylse_dom_sf"/>
</dbReference>
<dbReference type="InterPro" id="IPR023696">
    <property type="entry name" value="Ureohydrolase_dom_sf"/>
</dbReference>
<dbReference type="PANTHER" id="PTHR10625:SF44">
    <property type="entry name" value="HISTONE DEACETYLASE 19"/>
    <property type="match status" value="1"/>
</dbReference>
<dbReference type="PANTHER" id="PTHR10625">
    <property type="entry name" value="HISTONE DEACETYLASE HDAC1-RELATED"/>
    <property type="match status" value="1"/>
</dbReference>
<dbReference type="Pfam" id="PF00850">
    <property type="entry name" value="Hist_deacetyl"/>
    <property type="match status" value="1"/>
</dbReference>
<dbReference type="PIRSF" id="PIRSF037913">
    <property type="entry name" value="His_deacetylse_1"/>
    <property type="match status" value="1"/>
</dbReference>
<dbReference type="PRINTS" id="PR01270">
    <property type="entry name" value="HDASUPER"/>
</dbReference>
<dbReference type="PRINTS" id="PR01271">
    <property type="entry name" value="HISDACETLASE"/>
</dbReference>
<dbReference type="SUPFAM" id="SSF52768">
    <property type="entry name" value="Arginase/deacetylase"/>
    <property type="match status" value="1"/>
</dbReference>